<reference key="1">
    <citation type="journal article" date="1991" name="Eur. J. Biochem.">
        <title>The medium chains of the mammalian clathrin-associated proteins have a homolog in yeast.</title>
        <authorList>
            <person name="Nakayama Y."/>
            <person name="Goebl M."/>
            <person name="O'Brine Greco B."/>
            <person name="Lemmon S."/>
            <person name="Pingchang C.E."/>
            <person name="Kirchhausen T."/>
        </authorList>
    </citation>
    <scope>NUCLEOTIDE SEQUENCE [GENOMIC DNA]</scope>
</reference>
<reference key="2">
    <citation type="journal article" date="1997" name="Nature">
        <title>The nucleotide sequence of Saccharomyces cerevisiae chromosome XVI.</title>
        <authorList>
            <person name="Bussey H."/>
            <person name="Storms R.K."/>
            <person name="Ahmed A."/>
            <person name="Albermann K."/>
            <person name="Allen E."/>
            <person name="Ansorge W."/>
            <person name="Araujo R."/>
            <person name="Aparicio A."/>
            <person name="Barrell B.G."/>
            <person name="Badcock K."/>
            <person name="Benes V."/>
            <person name="Botstein D."/>
            <person name="Bowman S."/>
            <person name="Brueckner M."/>
            <person name="Carpenter J."/>
            <person name="Cherry J.M."/>
            <person name="Chung E."/>
            <person name="Churcher C.M."/>
            <person name="Coster F."/>
            <person name="Davis K."/>
            <person name="Davis R.W."/>
            <person name="Dietrich F.S."/>
            <person name="Delius H."/>
            <person name="DiPaolo T."/>
            <person name="Dubois E."/>
            <person name="Duesterhoeft A."/>
            <person name="Duncan M."/>
            <person name="Floeth M."/>
            <person name="Fortin N."/>
            <person name="Friesen J.D."/>
            <person name="Fritz C."/>
            <person name="Goffeau A."/>
            <person name="Hall J."/>
            <person name="Hebling U."/>
            <person name="Heumann K."/>
            <person name="Hilbert H."/>
            <person name="Hillier L.W."/>
            <person name="Hunicke-Smith S."/>
            <person name="Hyman R.W."/>
            <person name="Johnston M."/>
            <person name="Kalman S."/>
            <person name="Kleine K."/>
            <person name="Komp C."/>
            <person name="Kurdi O."/>
            <person name="Lashkari D."/>
            <person name="Lew H."/>
            <person name="Lin A."/>
            <person name="Lin D."/>
            <person name="Louis E.J."/>
            <person name="Marathe R."/>
            <person name="Messenguy F."/>
            <person name="Mewes H.-W."/>
            <person name="Mirtipati S."/>
            <person name="Moestl D."/>
            <person name="Mueller-Auer S."/>
            <person name="Namath A."/>
            <person name="Nentwich U."/>
            <person name="Oefner P."/>
            <person name="Pearson D."/>
            <person name="Petel F.X."/>
            <person name="Pohl T.M."/>
            <person name="Purnelle B."/>
            <person name="Rajandream M.A."/>
            <person name="Rechmann S."/>
            <person name="Rieger M."/>
            <person name="Riles L."/>
            <person name="Roberts D."/>
            <person name="Schaefer M."/>
            <person name="Scharfe M."/>
            <person name="Scherens B."/>
            <person name="Schramm S."/>
            <person name="Schroeder M."/>
            <person name="Sdicu A.-M."/>
            <person name="Tettelin H."/>
            <person name="Urrestarazu L.A."/>
            <person name="Ushinsky S."/>
            <person name="Vierendeels F."/>
            <person name="Vissers S."/>
            <person name="Voss H."/>
            <person name="Walsh S.V."/>
            <person name="Wambutt R."/>
            <person name="Wang Y."/>
            <person name="Wedler E."/>
            <person name="Wedler H."/>
            <person name="Winnett E."/>
            <person name="Zhong W.-W."/>
            <person name="Zollner A."/>
            <person name="Vo D.H."/>
            <person name="Hani J."/>
        </authorList>
    </citation>
    <scope>NUCLEOTIDE SEQUENCE [LARGE SCALE GENOMIC DNA]</scope>
    <source>
        <strain>ATCC 204508 / S288c</strain>
    </source>
</reference>
<reference key="3">
    <citation type="journal article" date="2014" name="G3 (Bethesda)">
        <title>The reference genome sequence of Saccharomyces cerevisiae: Then and now.</title>
        <authorList>
            <person name="Engel S.R."/>
            <person name="Dietrich F.S."/>
            <person name="Fisk D.G."/>
            <person name="Binkley G."/>
            <person name="Balakrishnan R."/>
            <person name="Costanzo M.C."/>
            <person name="Dwight S.S."/>
            <person name="Hitz B.C."/>
            <person name="Karra K."/>
            <person name="Nash R.S."/>
            <person name="Weng S."/>
            <person name="Wong E.D."/>
            <person name="Lloyd P."/>
            <person name="Skrzypek M.S."/>
            <person name="Miyasato S.R."/>
            <person name="Simison M."/>
            <person name="Cherry J.M."/>
        </authorList>
    </citation>
    <scope>GENOME REANNOTATION</scope>
    <source>
        <strain>ATCC 204508 / S288c</strain>
    </source>
</reference>
<reference key="4">
    <citation type="journal article" date="1999" name="Mol. Biol. Cell">
        <title>Adaptor complex-independent clathrin function in yeast.</title>
        <authorList>
            <person name="Yeung B.G."/>
            <person name="Phan H.L."/>
            <person name="Payne G.S."/>
        </authorList>
    </citation>
    <scope>FUNCTION</scope>
    <scope>SUBUNIT</scope>
    <scope>INTERACTION WITH CLATHRIN</scope>
</reference>
<reference key="5">
    <citation type="journal article" date="2003" name="Nature">
        <title>Global analysis of protein expression in yeast.</title>
        <authorList>
            <person name="Ghaemmaghami S."/>
            <person name="Huh W.-K."/>
            <person name="Bower K."/>
            <person name="Howson R.W."/>
            <person name="Belle A."/>
            <person name="Dephoure N."/>
            <person name="O'Shea E.K."/>
            <person name="Weissman J.S."/>
        </authorList>
    </citation>
    <scope>LEVEL OF PROTEIN EXPRESSION [LARGE SCALE ANALYSIS]</scope>
</reference>
<protein>
    <recommendedName>
        <fullName>AP-1 complex subunit mu-1-I</fullName>
    </recommendedName>
    <alternativeName>
        <fullName>Clathrin assembly protein complex 1 mu-1-I medium chain</fullName>
    </alternativeName>
    <alternativeName>
        <fullName>Clathrin coat assembly protein AP54</fullName>
    </alternativeName>
    <alternativeName>
        <fullName>Clathrin coat-associated protein AP54</fullName>
    </alternativeName>
    <alternativeName>
        <fullName>Golgi adaptor AP-1 54 kDa protein</fullName>
    </alternativeName>
    <alternativeName>
        <fullName>HA1 54 kDa subunit</fullName>
    </alternativeName>
    <alternativeName>
        <fullName>Mu(1)-adaptin</fullName>
    </alternativeName>
    <alternativeName>
        <fullName>Mu1-I-adaptin</fullName>
    </alternativeName>
</protein>
<proteinExistence type="evidence at protein level"/>
<gene>
    <name type="primary">APM1</name>
    <name type="synonym">YAP54</name>
    <name type="ordered locus">YPL259C</name>
    <name type="ORF">P0394</name>
</gene>
<accession>Q00776</accession>
<accession>D6W3B0</accession>
<name>AP1M1_YEAST</name>
<dbReference type="EMBL" id="X60288">
    <property type="protein sequence ID" value="CAA42828.1"/>
    <property type="molecule type" value="Genomic_DNA"/>
</dbReference>
<dbReference type="EMBL" id="Z73615">
    <property type="protein sequence ID" value="CAA97989.1"/>
    <property type="molecule type" value="Genomic_DNA"/>
</dbReference>
<dbReference type="EMBL" id="BK006949">
    <property type="protein sequence ID" value="DAA11176.1"/>
    <property type="molecule type" value="Genomic_DNA"/>
</dbReference>
<dbReference type="PIR" id="S65290">
    <property type="entry name" value="S65290"/>
</dbReference>
<dbReference type="RefSeq" id="NP_015064.1">
    <property type="nucleotide sequence ID" value="NM_001184073.1"/>
</dbReference>
<dbReference type="SMR" id="Q00776"/>
<dbReference type="BioGRID" id="35953">
    <property type="interactions" value="224"/>
</dbReference>
<dbReference type="ComplexPortal" id="CPX-532">
    <property type="entry name" value="Adaptor complex AP-1"/>
</dbReference>
<dbReference type="DIP" id="DIP-1198N"/>
<dbReference type="FunCoup" id="Q00776">
    <property type="interactions" value="673"/>
</dbReference>
<dbReference type="IntAct" id="Q00776">
    <property type="interactions" value="53"/>
</dbReference>
<dbReference type="MINT" id="Q00776"/>
<dbReference type="STRING" id="4932.YPL259C"/>
<dbReference type="iPTMnet" id="Q00776"/>
<dbReference type="PaxDb" id="4932-YPL259C"/>
<dbReference type="PeptideAtlas" id="Q00776"/>
<dbReference type="EnsemblFungi" id="YPL259C_mRNA">
    <property type="protein sequence ID" value="YPL259C"/>
    <property type="gene ID" value="YPL259C"/>
</dbReference>
<dbReference type="GeneID" id="855869"/>
<dbReference type="KEGG" id="sce:YPL259C"/>
<dbReference type="AGR" id="SGD:S000006180"/>
<dbReference type="SGD" id="S000006180">
    <property type="gene designation" value="APM1"/>
</dbReference>
<dbReference type="VEuPathDB" id="FungiDB:YPL259C"/>
<dbReference type="eggNOG" id="KOG0937">
    <property type="taxonomic scope" value="Eukaryota"/>
</dbReference>
<dbReference type="GeneTree" id="ENSGT00940000165747"/>
<dbReference type="HOGENOM" id="CLU_026996_0_2_1"/>
<dbReference type="InParanoid" id="Q00776"/>
<dbReference type="OMA" id="KPLIWCD"/>
<dbReference type="OrthoDB" id="10259133at2759"/>
<dbReference type="BioCyc" id="YEAST:G3O-34144-MONOMER"/>
<dbReference type="Reactome" id="R-SCE-432720">
    <property type="pathway name" value="Lysosome Vesicle Biogenesis"/>
</dbReference>
<dbReference type="Reactome" id="R-SCE-6798695">
    <property type="pathway name" value="Neutrophil degranulation"/>
</dbReference>
<dbReference type="Reactome" id="R-SCE-8856825">
    <property type="pathway name" value="Cargo recognition for clathrin-mediated endocytosis"/>
</dbReference>
<dbReference type="BioGRID-ORCS" id="855869">
    <property type="hits" value="1 hit in 10 CRISPR screens"/>
</dbReference>
<dbReference type="PRO" id="PR:Q00776"/>
<dbReference type="Proteomes" id="UP000002311">
    <property type="component" value="Chromosome XVI"/>
</dbReference>
<dbReference type="RNAct" id="Q00776">
    <property type="molecule type" value="protein"/>
</dbReference>
<dbReference type="GO" id="GO:0030121">
    <property type="term" value="C:AP-1 adaptor complex"/>
    <property type="evidence" value="ECO:0000314"/>
    <property type="project" value="SGD"/>
</dbReference>
<dbReference type="GO" id="GO:0005905">
    <property type="term" value="C:clathrin-coated pit"/>
    <property type="evidence" value="ECO:0007669"/>
    <property type="project" value="UniProtKB-SubCell"/>
</dbReference>
<dbReference type="GO" id="GO:0030136">
    <property type="term" value="C:clathrin-coated vesicle"/>
    <property type="evidence" value="ECO:0000318"/>
    <property type="project" value="GO_Central"/>
</dbReference>
<dbReference type="GO" id="GO:0005829">
    <property type="term" value="C:cytosol"/>
    <property type="evidence" value="ECO:0007669"/>
    <property type="project" value="GOC"/>
</dbReference>
<dbReference type="GO" id="GO:0035615">
    <property type="term" value="F:clathrin adaptor activity"/>
    <property type="evidence" value="ECO:0000318"/>
    <property type="project" value="GO_Central"/>
</dbReference>
<dbReference type="GO" id="GO:0006896">
    <property type="term" value="P:Golgi to vacuole transport"/>
    <property type="evidence" value="ECO:0000315"/>
    <property type="project" value="SGD"/>
</dbReference>
<dbReference type="GO" id="GO:0006886">
    <property type="term" value="P:intracellular protein transport"/>
    <property type="evidence" value="ECO:0007669"/>
    <property type="project" value="InterPro"/>
</dbReference>
<dbReference type="GO" id="GO:0048203">
    <property type="term" value="P:vesicle targeting, trans-Golgi to endosome"/>
    <property type="evidence" value="ECO:0000303"/>
    <property type="project" value="ComplexPortal"/>
</dbReference>
<dbReference type="GO" id="GO:0016192">
    <property type="term" value="P:vesicle-mediated transport"/>
    <property type="evidence" value="ECO:0000318"/>
    <property type="project" value="GO_Central"/>
</dbReference>
<dbReference type="CDD" id="cd09250">
    <property type="entry name" value="AP-1_Mu1_Cterm"/>
    <property type="match status" value="1"/>
</dbReference>
<dbReference type="CDD" id="cd14835">
    <property type="entry name" value="AP1_Mu_N"/>
    <property type="match status" value="1"/>
</dbReference>
<dbReference type="FunFam" id="2.60.40.1170:FF:000030">
    <property type="entry name" value="AP-1 complex subunit mu-1"/>
    <property type="match status" value="1"/>
</dbReference>
<dbReference type="FunFam" id="3.30.450.60:FF:000002">
    <property type="entry name" value="AP-2 complex subunit mu, putative"/>
    <property type="match status" value="1"/>
</dbReference>
<dbReference type="Gene3D" id="3.30.450.60">
    <property type="match status" value="1"/>
</dbReference>
<dbReference type="Gene3D" id="2.60.40.1170">
    <property type="entry name" value="Mu homology domain, subdomain B"/>
    <property type="match status" value="2"/>
</dbReference>
<dbReference type="InterPro" id="IPR050431">
    <property type="entry name" value="Adaptor_comp_med_subunit"/>
</dbReference>
<dbReference type="InterPro" id="IPR036168">
    <property type="entry name" value="AP2_Mu_C_sf"/>
</dbReference>
<dbReference type="InterPro" id="IPR022775">
    <property type="entry name" value="AP_mu_sigma_su"/>
</dbReference>
<dbReference type="InterPro" id="IPR001392">
    <property type="entry name" value="Clathrin_mu"/>
</dbReference>
<dbReference type="InterPro" id="IPR018240">
    <property type="entry name" value="Clathrin_mu_CS"/>
</dbReference>
<dbReference type="InterPro" id="IPR011012">
    <property type="entry name" value="Longin-like_dom_sf"/>
</dbReference>
<dbReference type="InterPro" id="IPR028565">
    <property type="entry name" value="MHD"/>
</dbReference>
<dbReference type="PANTHER" id="PTHR10529">
    <property type="entry name" value="AP COMPLEX SUBUNIT MU"/>
    <property type="match status" value="1"/>
</dbReference>
<dbReference type="Pfam" id="PF00928">
    <property type="entry name" value="Adap_comp_sub"/>
    <property type="match status" value="1"/>
</dbReference>
<dbReference type="Pfam" id="PF01217">
    <property type="entry name" value="Clat_adaptor_s"/>
    <property type="match status" value="1"/>
</dbReference>
<dbReference type="PIRSF" id="PIRSF005992">
    <property type="entry name" value="Clathrin_mu"/>
    <property type="match status" value="1"/>
</dbReference>
<dbReference type="PRINTS" id="PR00314">
    <property type="entry name" value="CLATHRINADPT"/>
</dbReference>
<dbReference type="SUPFAM" id="SSF49447">
    <property type="entry name" value="Second domain of Mu2 adaptin subunit (ap50) of ap2 adaptor"/>
    <property type="match status" value="1"/>
</dbReference>
<dbReference type="SUPFAM" id="SSF64356">
    <property type="entry name" value="SNARE-like"/>
    <property type="match status" value="1"/>
</dbReference>
<dbReference type="PROSITE" id="PS00990">
    <property type="entry name" value="CLAT_ADAPTOR_M_1"/>
    <property type="match status" value="1"/>
</dbReference>
<dbReference type="PROSITE" id="PS00991">
    <property type="entry name" value="CLAT_ADAPTOR_M_2"/>
    <property type="match status" value="1"/>
</dbReference>
<dbReference type="PROSITE" id="PS51072">
    <property type="entry name" value="MHD"/>
    <property type="match status" value="1"/>
</dbReference>
<comment type="function">
    <text evidence="4">Component of the adaptor complexes which link clathrin to receptors in coated vesicles. Clathrin-associated protein complexes are believed to interact with the cytoplasmic tails of membrane proteins, leading to their selection and concentration. The AP-1 complex interacts directly with clathrin. AP57 is probably a subunit of the Golgi membrane adaptor.</text>
</comment>
<comment type="subunit">
    <text evidence="4">Adaptor protein complex 1 (AP-1) is a heterotetramer composed of two large adaptins (gamma-type subunit APL4 and beta-type subunit APL2), a medium adaptin (mu-type subunit APM1) and a small adaptin (sigma-type subunit APS1). AP-1 interacts with clathrin.</text>
</comment>
<comment type="interaction">
    <interactant intactId="EBI-2624">
        <id>Q00776</id>
    </interactant>
    <interactant intactId="EBI-2206">
        <id>P36000</id>
        <label>APL2</label>
    </interactant>
    <organismsDiffer>false</organismsDiffer>
    <experiments>10</experiments>
</comment>
<comment type="interaction">
    <interactant intactId="EBI-2624">
        <id>Q00776</id>
    </interactant>
    <interactant intactId="EBI-2612">
        <id>P35181</id>
        <label>APS1</label>
    </interactant>
    <organismsDiffer>false</organismsDiffer>
    <experiments>5</experiments>
</comment>
<comment type="subcellular location">
    <subcellularLocation>
        <location>Cytoplasmic vesicle</location>
    </subcellularLocation>
    <subcellularLocation>
        <location evidence="1">Cytoplasmic vesicle</location>
        <location evidence="1">Clathrin-coated vesicle membrane</location>
        <topology evidence="1">Peripheral membrane protein</topology>
        <orientation evidence="1">Cytoplasmic side</orientation>
    </subcellularLocation>
    <subcellularLocation>
        <location evidence="1">Membrane</location>
        <location evidence="1">Clathrin-coated pit</location>
        <topology evidence="1">Peripheral membrane protein</topology>
        <orientation evidence="1">Cytoplasmic side</orientation>
    </subcellularLocation>
</comment>
<comment type="miscellaneous">
    <text evidence="5">Present with 4420 molecules/cell in log phase SD medium.</text>
</comment>
<comment type="similarity">
    <text evidence="6">Belongs to the adaptor complexes medium subunit family.</text>
</comment>
<feature type="chain" id="PRO_0000193778" description="AP-1 complex subunit mu-1-I">
    <location>
        <begin position="1"/>
        <end position="475"/>
    </location>
</feature>
<feature type="domain" description="MHD" evidence="2">
    <location>
        <begin position="175"/>
        <end position="473"/>
    </location>
</feature>
<feature type="region of interest" description="Disordered" evidence="3">
    <location>
        <begin position="240"/>
        <end position="262"/>
    </location>
</feature>
<feature type="sequence conflict" description="In Ref. 1; CAA42828." evidence="6" ref="1">
    <original>M</original>
    <variation>I</variation>
    <location>
        <position position="214"/>
    </location>
</feature>
<feature type="sequence conflict" description="In Ref. 1; CAA42828." evidence="6" ref="1">
    <original>D</original>
    <variation>H</variation>
    <location>
        <position position="216"/>
    </location>
</feature>
<feature type="sequence conflict" description="In Ref. 1; CAA42828." evidence="6" ref="1">
    <original>N</original>
    <variation>K</variation>
    <location>
        <position position="222"/>
    </location>
</feature>
<feature type="sequence conflict" description="In Ref. 1; CAA42828." evidence="6" ref="1">
    <original>P</original>
    <variation>R</variation>
    <location>
        <position position="433"/>
    </location>
</feature>
<feature type="sequence conflict" description="In Ref. 1; CAA42828." evidence="6" ref="1">
    <original>I</original>
    <variation>M</variation>
    <location>
        <position position="440"/>
    </location>
</feature>
<feature type="sequence conflict" description="In Ref. 1; CAA42828." evidence="6" ref="1">
    <location>
        <position position="450"/>
    </location>
</feature>
<sequence>MASAVYFCDHNGKPLLSRRYRDDIPLSAIDKFPILLSDLEEQSNLIPPCLNHNGLEYLFIQHNDLYVVAIVTSLSANAAAIFTFLHKLVEVLSDYLKTVEEESIRDNFVIIYELLDEVMDYGIPQITETKMLKQYITQKSFKLVKSAKKKRNATRPPVALTNSVSWRPEGITHKKNEAFLDIVESINMLMTQKGQVLRSEIIGDVKVNSKLSGMPDLKLGINDKGIFSKYLDDDTNIPSASATTSDNNTETDKKPSITSSSATNKKKVNIELEDLKFHQCVRLSKFENEKIITFIPPDGKFDLMNYRLSTTIKPLIWCDVNVQVHSNSRIEIHCKAKAQIKRKSTATNVEILIPVPDDADTPTFKYSHGSLKYVPEKSAILWKIRSFPGGKEYSMSAELGLPSISNNEDGNRTMPKSNAEILKGPVQIKFQIPYFTTSGIQVRYLKINEPKLQYKSYPWVRYITQSGDDYTIRLT</sequence>
<keyword id="KW-0168">Coated pit</keyword>
<keyword id="KW-0968">Cytoplasmic vesicle</keyword>
<keyword id="KW-0472">Membrane</keyword>
<keyword id="KW-0653">Protein transport</keyword>
<keyword id="KW-1185">Reference proteome</keyword>
<keyword id="KW-0813">Transport</keyword>
<organism>
    <name type="scientific">Saccharomyces cerevisiae (strain ATCC 204508 / S288c)</name>
    <name type="common">Baker's yeast</name>
    <dbReference type="NCBI Taxonomy" id="559292"/>
    <lineage>
        <taxon>Eukaryota</taxon>
        <taxon>Fungi</taxon>
        <taxon>Dikarya</taxon>
        <taxon>Ascomycota</taxon>
        <taxon>Saccharomycotina</taxon>
        <taxon>Saccharomycetes</taxon>
        <taxon>Saccharomycetales</taxon>
        <taxon>Saccharomycetaceae</taxon>
        <taxon>Saccharomyces</taxon>
    </lineage>
</organism>
<evidence type="ECO:0000250" key="1"/>
<evidence type="ECO:0000255" key="2">
    <source>
        <dbReference type="PROSITE-ProRule" id="PRU00404"/>
    </source>
</evidence>
<evidence type="ECO:0000256" key="3">
    <source>
        <dbReference type="SAM" id="MobiDB-lite"/>
    </source>
</evidence>
<evidence type="ECO:0000269" key="4">
    <source>
    </source>
</evidence>
<evidence type="ECO:0000269" key="5">
    <source>
    </source>
</evidence>
<evidence type="ECO:0000305" key="6"/>